<reference key="1">
    <citation type="journal article" date="2005" name="Nature">
        <title>Sequencing of Aspergillus nidulans and comparative analysis with A. fumigatus and A. oryzae.</title>
        <authorList>
            <person name="Galagan J.E."/>
            <person name="Calvo S.E."/>
            <person name="Cuomo C."/>
            <person name="Ma L.-J."/>
            <person name="Wortman J.R."/>
            <person name="Batzoglou S."/>
            <person name="Lee S.-I."/>
            <person name="Bastuerkmen M."/>
            <person name="Spevak C.C."/>
            <person name="Clutterbuck J."/>
            <person name="Kapitonov V."/>
            <person name="Jurka J."/>
            <person name="Scazzocchio C."/>
            <person name="Farman M.L."/>
            <person name="Butler J."/>
            <person name="Purcell S."/>
            <person name="Harris S."/>
            <person name="Braus G.H."/>
            <person name="Draht O."/>
            <person name="Busch S."/>
            <person name="D'Enfert C."/>
            <person name="Bouchier C."/>
            <person name="Goldman G.H."/>
            <person name="Bell-Pedersen D."/>
            <person name="Griffiths-Jones S."/>
            <person name="Doonan J.H."/>
            <person name="Yu J."/>
            <person name="Vienken K."/>
            <person name="Pain A."/>
            <person name="Freitag M."/>
            <person name="Selker E.U."/>
            <person name="Archer D.B."/>
            <person name="Penalva M.A."/>
            <person name="Oakley B.R."/>
            <person name="Momany M."/>
            <person name="Tanaka T."/>
            <person name="Kumagai T."/>
            <person name="Asai K."/>
            <person name="Machida M."/>
            <person name="Nierman W.C."/>
            <person name="Denning D.W."/>
            <person name="Caddick M.X."/>
            <person name="Hynes M."/>
            <person name="Paoletti M."/>
            <person name="Fischer R."/>
            <person name="Miller B.L."/>
            <person name="Dyer P.S."/>
            <person name="Sachs M.S."/>
            <person name="Osmani S.A."/>
            <person name="Birren B.W."/>
        </authorList>
    </citation>
    <scope>NUCLEOTIDE SEQUENCE [LARGE SCALE GENOMIC DNA]</scope>
    <source>
        <strain>FGSC A4 / ATCC 38163 / CBS 112.46 / NRRL 194 / M139</strain>
    </source>
</reference>
<reference key="2">
    <citation type="journal article" date="2009" name="Fungal Genet. Biol.">
        <title>The 2008 update of the Aspergillus nidulans genome annotation: a community effort.</title>
        <authorList>
            <person name="Wortman J.R."/>
            <person name="Gilsenan J.M."/>
            <person name="Joardar V."/>
            <person name="Deegan J."/>
            <person name="Clutterbuck J."/>
            <person name="Andersen M.R."/>
            <person name="Archer D."/>
            <person name="Bencina M."/>
            <person name="Braus G."/>
            <person name="Coutinho P."/>
            <person name="von Dohren H."/>
            <person name="Doonan J."/>
            <person name="Driessen A.J."/>
            <person name="Durek P."/>
            <person name="Espeso E."/>
            <person name="Fekete E."/>
            <person name="Flipphi M."/>
            <person name="Estrada C.G."/>
            <person name="Geysens S."/>
            <person name="Goldman G."/>
            <person name="de Groot P.W."/>
            <person name="Hansen K."/>
            <person name="Harris S.D."/>
            <person name="Heinekamp T."/>
            <person name="Helmstaedt K."/>
            <person name="Henrissat B."/>
            <person name="Hofmann G."/>
            <person name="Homan T."/>
            <person name="Horio T."/>
            <person name="Horiuchi H."/>
            <person name="James S."/>
            <person name="Jones M."/>
            <person name="Karaffa L."/>
            <person name="Karanyi Z."/>
            <person name="Kato M."/>
            <person name="Keller N."/>
            <person name="Kelly D.E."/>
            <person name="Kiel J.A."/>
            <person name="Kim J.M."/>
            <person name="van der Klei I.J."/>
            <person name="Klis F.M."/>
            <person name="Kovalchuk A."/>
            <person name="Krasevec N."/>
            <person name="Kubicek C.P."/>
            <person name="Liu B."/>
            <person name="Maccabe A."/>
            <person name="Meyer V."/>
            <person name="Mirabito P."/>
            <person name="Miskei M."/>
            <person name="Mos M."/>
            <person name="Mullins J."/>
            <person name="Nelson D.R."/>
            <person name="Nielsen J."/>
            <person name="Oakley B.R."/>
            <person name="Osmani S.A."/>
            <person name="Pakula T."/>
            <person name="Paszewski A."/>
            <person name="Paulsen I."/>
            <person name="Pilsyk S."/>
            <person name="Pocsi I."/>
            <person name="Punt P.J."/>
            <person name="Ram A.F."/>
            <person name="Ren Q."/>
            <person name="Robellet X."/>
            <person name="Robson G."/>
            <person name="Seiboth B."/>
            <person name="van Solingen P."/>
            <person name="Specht T."/>
            <person name="Sun J."/>
            <person name="Taheri-Talesh N."/>
            <person name="Takeshita N."/>
            <person name="Ussery D."/>
            <person name="vanKuyk P.A."/>
            <person name="Visser H."/>
            <person name="van de Vondervoort P.J."/>
            <person name="de Vries R.P."/>
            <person name="Walton J."/>
            <person name="Xiang X."/>
            <person name="Xiong Y."/>
            <person name="Zeng A.P."/>
            <person name="Brandt B.W."/>
            <person name="Cornell M.J."/>
            <person name="van den Hondel C.A."/>
            <person name="Visser J."/>
            <person name="Oliver S.G."/>
            <person name="Turner G."/>
        </authorList>
    </citation>
    <scope>GENOME REANNOTATION</scope>
    <source>
        <strain>FGSC A4 / ATCC 38163 / CBS 112.46 / NRRL 194 / M139</strain>
    </source>
</reference>
<evidence type="ECO:0000250" key="1"/>
<evidence type="ECO:0000256" key="2">
    <source>
        <dbReference type="SAM" id="MobiDB-lite"/>
    </source>
</evidence>
<evidence type="ECO:0000305" key="3"/>
<sequence>MASQYAAELCMLLVEDNFGELFGRIFSTLHRYERLTLPRLLGLTRLSENRLRAALVAMIQHHLVHFYTAVEEGGVTYYSANMQAAYYLIRSGKILEFVEDRLGKYAATVMSTIMYLGHAQVSHLDTLPELRSDASKTNGVNEGEHDRPEGENETNGTNGEHVSDQPALLHPTLKALAGHGYIVRVREAHFQSIADNILNIERQIRSGDSVQSMKGKKLEEFVVEKTADMLKERLDGDLTRGLIVNGVPRGVKRSQTNGVSDDNETEKARFDYDDGEDEDEENEWLDDEVPMESSLTVRVNYEKLDVALRNRRFLELAERGAPPESAQIYDYLLRRIEYQTSKCRDASEIPREGEEGEQYSVPIPLSALARDIDPYLDLAGSLGPTNTPANNRLGKRTFDDTVDDNDDDHGATGNRTYEIDQHLSLLAQPPLNLTSKRLNGGIINWTVEFRHLARKLRHLELERIVEARYGDVALRVLRVLQAKGKLDEKRLQEISLLPFKDLRQVLASMQTGGFVDLQEVPRDAQRQPSRTIYLWYYDPDRARDSMLQDTYKAMSRCLQRLKFERGRLKDFLEKTERSDVKGNEELYLSEGELDRLREWRAKEALLIGEVARLDDMIAVMRDY</sequence>
<accession>Q5ATV8</accession>
<accession>C8V3P4</accession>
<protein>
    <recommendedName>
        <fullName>DNA-directed RNA polymerase III subunit rpc3</fullName>
        <shortName>RNA polymerase III subunit C3</shortName>
    </recommendedName>
</protein>
<name>RPC3_EMENI</name>
<feature type="chain" id="PRO_0000351034" description="DNA-directed RNA polymerase III subunit rpc3">
    <location>
        <begin position="1"/>
        <end position="623"/>
    </location>
</feature>
<feature type="region of interest" description="Disordered" evidence="2">
    <location>
        <begin position="131"/>
        <end position="164"/>
    </location>
</feature>
<feature type="region of interest" description="Disordered" evidence="2">
    <location>
        <begin position="249"/>
        <end position="282"/>
    </location>
</feature>
<feature type="region of interest" description="Disordered" evidence="2">
    <location>
        <begin position="381"/>
        <end position="412"/>
    </location>
</feature>
<feature type="region of interest" description="Leucine-zipper">
    <location>
        <begin position="550"/>
        <end position="571"/>
    </location>
</feature>
<feature type="compositionally biased region" description="Acidic residues" evidence="2">
    <location>
        <begin position="273"/>
        <end position="282"/>
    </location>
</feature>
<dbReference type="EMBL" id="AACD01000145">
    <property type="protein sequence ID" value="EAA59010.1"/>
    <property type="status" value="ALT_SEQ"/>
    <property type="molecule type" value="Genomic_DNA"/>
</dbReference>
<dbReference type="EMBL" id="BN001302">
    <property type="protein sequence ID" value="CBF74254.1"/>
    <property type="molecule type" value="Genomic_DNA"/>
</dbReference>
<dbReference type="RefSeq" id="XP_681541.1">
    <property type="nucleotide sequence ID" value="XM_676449.1"/>
</dbReference>
<dbReference type="SMR" id="Q5ATV8"/>
<dbReference type="FunCoup" id="Q5ATV8">
    <property type="interactions" value="445"/>
</dbReference>
<dbReference type="STRING" id="227321.Q5ATV8"/>
<dbReference type="EnsemblFungi" id="CBF74254">
    <property type="protein sequence ID" value="CBF74254"/>
    <property type="gene ID" value="ANIA_08272"/>
</dbReference>
<dbReference type="KEGG" id="ani:ANIA_08272"/>
<dbReference type="VEuPathDB" id="FungiDB:AN8272"/>
<dbReference type="eggNOG" id="KOG2587">
    <property type="taxonomic scope" value="Eukaryota"/>
</dbReference>
<dbReference type="HOGENOM" id="CLU_023294_0_0_1"/>
<dbReference type="InParanoid" id="Q5ATV8"/>
<dbReference type="OMA" id="KHRFVRH"/>
<dbReference type="OrthoDB" id="272392at2759"/>
<dbReference type="Proteomes" id="UP000000560">
    <property type="component" value="Chromosome II"/>
</dbReference>
<dbReference type="GO" id="GO:0005666">
    <property type="term" value="C:RNA polymerase III complex"/>
    <property type="evidence" value="ECO:0000318"/>
    <property type="project" value="GO_Central"/>
</dbReference>
<dbReference type="GO" id="GO:0003697">
    <property type="term" value="F:single-stranded DNA binding"/>
    <property type="evidence" value="ECO:0007669"/>
    <property type="project" value="InterPro"/>
</dbReference>
<dbReference type="GO" id="GO:0006351">
    <property type="term" value="P:DNA-templated transcription"/>
    <property type="evidence" value="ECO:0007669"/>
    <property type="project" value="InterPro"/>
</dbReference>
<dbReference type="FunFam" id="1.10.10.10:FF:000696">
    <property type="entry name" value="DNA-directed RNA polymerase III subunit rpc3"/>
    <property type="match status" value="1"/>
</dbReference>
<dbReference type="Gene3D" id="1.10.10.10">
    <property type="entry name" value="Winged helix-like DNA-binding domain superfamily/Winged helix DNA-binding domain"/>
    <property type="match status" value="2"/>
</dbReference>
<dbReference type="InterPro" id="IPR055207">
    <property type="entry name" value="POLR3C_WHD"/>
</dbReference>
<dbReference type="InterPro" id="IPR013197">
    <property type="entry name" value="RNA_pol_III_RPC82-rel_HTH"/>
</dbReference>
<dbReference type="InterPro" id="IPR008806">
    <property type="entry name" value="RNA_pol_III_Rpc82_C"/>
</dbReference>
<dbReference type="InterPro" id="IPR039748">
    <property type="entry name" value="RPC3"/>
</dbReference>
<dbReference type="InterPro" id="IPR036388">
    <property type="entry name" value="WH-like_DNA-bd_sf"/>
</dbReference>
<dbReference type="PANTHER" id="PTHR12949:SF0">
    <property type="entry name" value="DNA-DIRECTED RNA POLYMERASE III SUBUNIT RPC3"/>
    <property type="match status" value="1"/>
</dbReference>
<dbReference type="PANTHER" id="PTHR12949">
    <property type="entry name" value="RNA POLYMERASE III DNA DIRECTED -RELATED"/>
    <property type="match status" value="1"/>
</dbReference>
<dbReference type="Pfam" id="PF08221">
    <property type="entry name" value="HTH_9"/>
    <property type="match status" value="1"/>
</dbReference>
<dbReference type="Pfam" id="PF22536">
    <property type="entry name" value="POLR3C_WHD"/>
    <property type="match status" value="1"/>
</dbReference>
<dbReference type="Pfam" id="PF05645">
    <property type="entry name" value="RNA_pol_Rpc82"/>
    <property type="match status" value="1"/>
</dbReference>
<keyword id="KW-0240">DNA-directed RNA polymerase</keyword>
<keyword id="KW-0539">Nucleus</keyword>
<keyword id="KW-1185">Reference proteome</keyword>
<keyword id="KW-0804">Transcription</keyword>
<keyword id="KW-0862">Zinc</keyword>
<comment type="function">
    <text evidence="1">DNA-dependent RNA polymerase catalyzes the transcription of DNA into RNA using the four ribonucleoside triphosphates as substrates. Specific core component of RNA polymerase III which synthesizes small RNAs, such as 5S rRNA and tRNAs (By similarity).</text>
</comment>
<comment type="subunit">
    <text evidence="1">Component of the RNA polymerase III (Pol III) complex consisting of 17 subunits.</text>
</comment>
<comment type="subcellular location">
    <subcellularLocation>
        <location evidence="1">Nucleus</location>
    </subcellularLocation>
</comment>
<comment type="similarity">
    <text evidence="3">Belongs to the RNA polymerase beta chain family.</text>
</comment>
<comment type="sequence caution" evidence="3">
    <conflict type="erroneous gene model prediction">
        <sequence resource="EMBL-CDS" id="EAA59010"/>
    </conflict>
</comment>
<organism>
    <name type="scientific">Emericella nidulans (strain FGSC A4 / ATCC 38163 / CBS 112.46 / NRRL 194 / M139)</name>
    <name type="common">Aspergillus nidulans</name>
    <dbReference type="NCBI Taxonomy" id="227321"/>
    <lineage>
        <taxon>Eukaryota</taxon>
        <taxon>Fungi</taxon>
        <taxon>Dikarya</taxon>
        <taxon>Ascomycota</taxon>
        <taxon>Pezizomycotina</taxon>
        <taxon>Eurotiomycetes</taxon>
        <taxon>Eurotiomycetidae</taxon>
        <taxon>Eurotiales</taxon>
        <taxon>Aspergillaceae</taxon>
        <taxon>Aspergillus</taxon>
        <taxon>Aspergillus subgen. Nidulantes</taxon>
    </lineage>
</organism>
<gene>
    <name type="primary">rpc82</name>
    <name type="synonym">rpc3</name>
    <name type="ORF">AN8272</name>
</gene>
<proteinExistence type="inferred from homology"/>